<sequence length="158" mass="17709">MSYTITDPSKLAYLSSAWADPNSLINLCTNSLGNQFQTQQARTTVQQQFADVWQPVPTLTSRFPAGAGYFRVYRYDPILDPLITFLMGTFDTRNRIIEVENPQNPTTTETLDATRRVDDATVAIRSAINNLLNELVRGTGMYNQVSFETISGLTWTSS</sequence>
<gene>
    <name type="primary">CP</name>
</gene>
<feature type="initiator methionine" description="Removed; by host">
    <location>
        <position position="1"/>
    </location>
</feature>
<feature type="chain" id="PRO_0000144932" description="Capsid protein">
    <location>
        <begin position="2"/>
        <end position="158"/>
    </location>
</feature>
<feature type="modified residue" description="N-acetylserine; by host" evidence="1">
    <location>
        <position position="2"/>
    </location>
</feature>
<accession>P03578</accession>
<organism>
    <name type="scientific">Odontoglossum ringspot virus (isolate Japan)</name>
    <name type="common">ORSV</name>
    <dbReference type="NCBI Taxonomy" id="138307"/>
    <lineage>
        <taxon>Viruses</taxon>
        <taxon>Riboviria</taxon>
        <taxon>Orthornavirae</taxon>
        <taxon>Kitrinoviricota</taxon>
        <taxon>Alsuviricetes</taxon>
        <taxon>Martellivirales</taxon>
        <taxon>Virgaviridae</taxon>
        <taxon>Tobamovirus</taxon>
        <taxon>Odontoglossum ringspot virus</taxon>
    </lineage>
</organism>
<comment type="function">
    <text>Capsid protein self-assembles to form rod-shaped virions about 18 nm in diameter with a central canal enclosing the viral genomic RNA.</text>
</comment>
<comment type="subcellular location">
    <subcellularLocation>
        <location evidence="2">Virion</location>
    </subcellularLocation>
</comment>
<comment type="similarity">
    <text evidence="2">Belongs to the virgaviridae capsid protein family.</text>
</comment>
<organismHost>
    <name type="scientific">Cymbidium</name>
    <dbReference type="NCBI Taxonomy" id="14366"/>
</organismHost>
<organismHost>
    <name type="scientific">Odontoglossum</name>
    <dbReference type="NCBI Taxonomy" id="154697"/>
</organismHost>
<proteinExistence type="evidence at protein level"/>
<dbReference type="EMBL" id="X55295">
    <property type="protein sequence ID" value="CAA39007.1"/>
    <property type="molecule type" value="Genomic_RNA"/>
</dbReference>
<dbReference type="PIR" id="JQ1266">
    <property type="entry name" value="JQ1266"/>
</dbReference>
<dbReference type="PIR" id="S14468">
    <property type="entry name" value="S14468"/>
</dbReference>
<dbReference type="SMR" id="P03578"/>
<dbReference type="GO" id="GO:0019029">
    <property type="term" value="C:helical viral capsid"/>
    <property type="evidence" value="ECO:0007669"/>
    <property type="project" value="UniProtKB-KW"/>
</dbReference>
<dbReference type="GO" id="GO:0005198">
    <property type="term" value="F:structural molecule activity"/>
    <property type="evidence" value="ECO:0007669"/>
    <property type="project" value="InterPro"/>
</dbReference>
<dbReference type="Gene3D" id="1.20.120.70">
    <property type="entry name" value="Tobacco mosaic virus-like, coat protein"/>
    <property type="match status" value="1"/>
</dbReference>
<dbReference type="InterPro" id="IPR001337">
    <property type="entry name" value="TMV-like_coat"/>
</dbReference>
<dbReference type="InterPro" id="IPR036417">
    <property type="entry name" value="TMV-like_coat_sf"/>
</dbReference>
<dbReference type="Pfam" id="PF00721">
    <property type="entry name" value="TMV_coat"/>
    <property type="match status" value="1"/>
</dbReference>
<dbReference type="SUPFAM" id="SSF47195">
    <property type="entry name" value="TMV-like viral coat proteins"/>
    <property type="match status" value="1"/>
</dbReference>
<name>CAPSD_ORSVJ</name>
<keyword id="KW-0007">Acetylation</keyword>
<keyword id="KW-0167">Capsid protein</keyword>
<keyword id="KW-0903">Direct protein sequencing</keyword>
<keyword id="KW-1139">Helical capsid protein</keyword>
<keyword id="KW-0946">Virion</keyword>
<reference key="1">
    <citation type="journal article" date="1991" name="J. Gen. Virol.">
        <title>Molecular cloning, sequencing and expression in Escherichia coli of the odontoglossum ringspot virus coat protein gene.</title>
        <authorList>
            <person name="Isomura Y."/>
            <person name="Matumoto Y."/>
            <person name="Murayama A."/>
            <person name="Chatani M."/>
            <person name="Inouye N."/>
            <person name="Ikegami M."/>
        </authorList>
    </citation>
    <scope>NUCLEOTIDE SEQUENCE [GENOMIC RNA]</scope>
</reference>
<reference key="2">
    <citation type="thesis" date="1970" institute="University of Tuebingen" country="Germany">
        <authorList>
            <person name="Hennig B."/>
        </authorList>
    </citation>
    <scope>PRELIMINARY PROTEIN SEQUENCE OF 2-158</scope>
    <scope>ACETYLATION AT SER-2</scope>
</reference>
<evidence type="ECO:0000269" key="1">
    <source ref="2"/>
</evidence>
<evidence type="ECO:0000305" key="2"/>
<protein>
    <recommendedName>
        <fullName>Capsid protein</fullName>
    </recommendedName>
    <alternativeName>
        <fullName>Coat protein</fullName>
    </alternativeName>
</protein>